<feature type="chain" id="PRO_0000373936" description="BRISC and BRCA1-A complex member 2">
    <location>
        <begin position="1"/>
        <end position="386"/>
    </location>
</feature>
<feature type="region of interest" description="UEV-like 1">
    <location>
        <begin position="33"/>
        <end position="150"/>
    </location>
</feature>
<feature type="region of interest" description="UEV-like 2">
    <location>
        <begin position="278"/>
        <end position="367"/>
    </location>
</feature>
<keyword id="KW-0053">Apoptosis</keyword>
<keyword id="KW-0131">Cell cycle</keyword>
<keyword id="KW-0132">Cell division</keyword>
<keyword id="KW-0156">Chromatin regulator</keyword>
<keyword id="KW-0963">Cytoplasm</keyword>
<keyword id="KW-0227">DNA damage</keyword>
<keyword id="KW-0234">DNA repair</keyword>
<keyword id="KW-0498">Mitosis</keyword>
<keyword id="KW-0539">Nucleus</keyword>
<keyword id="KW-1185">Reference proteome</keyword>
<keyword id="KW-0677">Repeat</keyword>
<keyword id="KW-0833">Ubl conjugation pathway</keyword>
<dbReference type="EMBL" id="BC092902">
    <property type="protein sequence ID" value="AAH92902.1"/>
    <property type="molecule type" value="mRNA"/>
</dbReference>
<dbReference type="RefSeq" id="NP_001017777.1">
    <property type="nucleotide sequence ID" value="NM_001017777.1"/>
</dbReference>
<dbReference type="SMR" id="Q568D5"/>
<dbReference type="FunCoup" id="Q568D5">
    <property type="interactions" value="1134"/>
</dbReference>
<dbReference type="STRING" id="7955.ENSDARP00000056741"/>
<dbReference type="PaxDb" id="7955-ENSDARP00000056741"/>
<dbReference type="GeneID" id="550474"/>
<dbReference type="KEGG" id="dre:550474"/>
<dbReference type="AGR" id="ZFIN:ZDB-GENE-050417-299"/>
<dbReference type="CTD" id="9577"/>
<dbReference type="ZFIN" id="ZDB-GENE-050417-299">
    <property type="gene designation" value="babam2"/>
</dbReference>
<dbReference type="eggNOG" id="ENOG502QUU0">
    <property type="taxonomic scope" value="Eukaryota"/>
</dbReference>
<dbReference type="InParanoid" id="Q568D5"/>
<dbReference type="OrthoDB" id="538811at2759"/>
<dbReference type="PhylomeDB" id="Q568D5"/>
<dbReference type="PRO" id="PR:Q568D5"/>
<dbReference type="Proteomes" id="UP000000437">
    <property type="component" value="Chromosome 17"/>
</dbReference>
<dbReference type="GO" id="GO:0070531">
    <property type="term" value="C:BRCA1-A complex"/>
    <property type="evidence" value="ECO:0000250"/>
    <property type="project" value="UniProtKB"/>
</dbReference>
<dbReference type="GO" id="GO:0070552">
    <property type="term" value="C:BRISC complex"/>
    <property type="evidence" value="ECO:0000250"/>
    <property type="project" value="UniProtKB"/>
</dbReference>
<dbReference type="GO" id="GO:0005737">
    <property type="term" value="C:cytoplasm"/>
    <property type="evidence" value="ECO:0000250"/>
    <property type="project" value="UniProtKB"/>
</dbReference>
<dbReference type="GO" id="GO:0005634">
    <property type="term" value="C:nucleus"/>
    <property type="evidence" value="ECO:0000250"/>
    <property type="project" value="UniProtKB"/>
</dbReference>
<dbReference type="GO" id="GO:0031593">
    <property type="term" value="F:polyubiquitin modification-dependent protein binding"/>
    <property type="evidence" value="ECO:0000250"/>
    <property type="project" value="UniProtKB"/>
</dbReference>
<dbReference type="GO" id="GO:0006915">
    <property type="term" value="P:apoptotic process"/>
    <property type="evidence" value="ECO:0007669"/>
    <property type="project" value="UniProtKB-KW"/>
</dbReference>
<dbReference type="GO" id="GO:0051301">
    <property type="term" value="P:cell division"/>
    <property type="evidence" value="ECO:0007669"/>
    <property type="project" value="UniProtKB-KW"/>
</dbReference>
<dbReference type="GO" id="GO:0006325">
    <property type="term" value="P:chromatin organization"/>
    <property type="evidence" value="ECO:0007669"/>
    <property type="project" value="UniProtKB-KW"/>
</dbReference>
<dbReference type="GO" id="GO:0006302">
    <property type="term" value="P:double-strand break repair"/>
    <property type="evidence" value="ECO:0000250"/>
    <property type="project" value="UniProtKB"/>
</dbReference>
<dbReference type="GO" id="GO:0007095">
    <property type="term" value="P:mitotic G2 DNA damage checkpoint signaling"/>
    <property type="evidence" value="ECO:0000250"/>
    <property type="project" value="UniProtKB"/>
</dbReference>
<dbReference type="GO" id="GO:0045739">
    <property type="term" value="P:positive regulation of DNA repair"/>
    <property type="evidence" value="ECO:0000250"/>
    <property type="project" value="UniProtKB"/>
</dbReference>
<dbReference type="GO" id="GO:0010212">
    <property type="term" value="P:response to ionizing radiation"/>
    <property type="evidence" value="ECO:0000250"/>
    <property type="project" value="UniProtKB"/>
</dbReference>
<dbReference type="CDD" id="cd23664">
    <property type="entry name" value="BRE"/>
    <property type="match status" value="1"/>
</dbReference>
<dbReference type="InterPro" id="IPR010358">
    <property type="entry name" value="BRE"/>
</dbReference>
<dbReference type="PANTHER" id="PTHR15189">
    <property type="entry name" value="BRISC AND BRCA1-A COMPLEX MEMBER 2"/>
    <property type="match status" value="1"/>
</dbReference>
<dbReference type="PANTHER" id="PTHR15189:SF7">
    <property type="entry name" value="BRISC AND BRCA1-A COMPLEX MEMBER 2"/>
    <property type="match status" value="1"/>
</dbReference>
<dbReference type="Pfam" id="PF06113">
    <property type="entry name" value="BRE"/>
    <property type="match status" value="1"/>
</dbReference>
<comment type="function">
    <text evidence="1">Component of the BRCA1-A complex, a complex that specifically recognizes 'Lys-63'-linked ubiquitinated histones H2A and H2AX at DNA lesion sites. The BRCA1-A complex also possesses deubiquitinase activity that specifically removes 'Lys-63'-linked ubiquitin on histones H2A and H2AX. In the BRCA1-A complex, it acts as an adapter that bridges the interaction between babam1/nba1 and the rest of the complex, thereby being required for the complex integrity. Component of the BRISC complex, a multiprotein complex that specifically cleaves 'Lys-63'-linked ubiquitin in various substrates (PubMed:26344097). Within the BRISC complex, acts as an adapter that bridges the interaction between babam1/nba1 and the rest of the complex, thereby being required for the complex integrity. The BRISC complex is required for normal mitotic spindle assembly and microtubule attachment to kinetochores via its role in deubiquitinating numa1. May play a role in homeostasis or cellular differentiation in cells of neural, epithelial and germline origins. May also act as a death receptor-associated anti-apoptotic protein, which inhibits the mitochondrial apoptotic pathway.</text>
</comment>
<comment type="subunit">
    <text evidence="1">Component of the ARISC complex, at least composed of uimc1/rap80, abraxas1, brcc3/brcc36, BABAM2 and babam1/nba1. Component of the BRCA1-A complex, at least composed of bard1, uimc1/rap80, abraxas1, brcc3/brcc36, BABAM2 and babam1/nba1. In the BRCA1-A complex, interacts directly with abraxas1, brcc3/brcc36 and babam1/nba1. Binds polyubiquitin. Component of the BRISC complex, at least composed of abraxas2, brcc3/brcc36, babam2 and babam1/nba1 (PubMed:26344097).</text>
</comment>
<comment type="subcellular location">
    <subcellularLocation>
        <location evidence="1">Cytoplasm</location>
    </subcellularLocation>
    <subcellularLocation>
        <location evidence="1">Nucleus</location>
    </subcellularLocation>
    <text evidence="1">Localizes at sites of DNA damage at double-strand breaks (DSBs).</text>
</comment>
<comment type="domain">
    <text evidence="1">Contains 2 ubiquitin-conjugating enzyme family-like (UEV-like) regions. These regions lack the critical Cys residues required for ubiquitination but retain the ability to bind ubiquitin.</text>
</comment>
<comment type="similarity">
    <text evidence="2">Belongs to the BABAM2 family.</text>
</comment>
<comment type="caution">
    <text evidence="3 4">There is no annotated ortholog of the vertebrate gene BRCA1 in the current zebrafish genome (PubMed:23594743). Therefore, mentions of brca1 in relevant curated zebrafish entries have been removed. However some complexes, conserved widely across species, have BRCA1 in their name and so have been left unchanged.</text>
</comment>
<evidence type="ECO:0000250" key="1">
    <source>
        <dbReference type="UniProtKB" id="Q9NXR7"/>
    </source>
</evidence>
<evidence type="ECO:0000255" key="2"/>
<evidence type="ECO:0000303" key="3">
    <source>
    </source>
</evidence>
<evidence type="ECO:0000305" key="4"/>
<protein>
    <recommendedName>
        <fullName>BRISC and BRCA1-A complex member 2</fullName>
    </recommendedName>
    <alternativeName>
        <fullName>BRCA1-A complex subunit BRE</fullName>
    </alternativeName>
    <alternativeName>
        <fullName>BRCA1/BRCA2-containing complex subunit 45</fullName>
    </alternativeName>
    <alternativeName>
        <fullName>Brain and reproductive organ-expressed protein</fullName>
    </alternativeName>
</protein>
<sequence length="386" mass="43829">MNSLSPELALSRISPELRPLLCSIVRNGRVGLDSSSCLRITDLKSGCTSLMPGPCCDRFKLHIPYAGETLKWDIIFNARDPELPPDFIFGEDADFLPEPSELPNLVSWDSGKPECLLLLVKEMLQQYHQYQCQRLRDSSRLLFEYDSLLEDPNYGRNMEIYAGRKNSWTGEFSARFLLKLPVDFSNIPIYLLKDTALDPGEDVALLSVSFEDAEATQVFPKLYLSPSIEHALGGSSALHIPAFPSGGCLIDYVPQVCQLLTNKVQYVIQGYHKRREYIAAFLSHFGMGVVEYDAVGFTKLTLLLMWKDFCFLVHVDLPLYFPRDQPTLTFQSIYHFTSSGQLYSQVQKSYPYSPRWDGNEMAKRAKAYFKSFIPQFQEGAFANGKL</sequence>
<name>BABA2_DANRE</name>
<gene>
    <name type="primary">babam2</name>
    <name type="synonym">bre</name>
    <name type="ORF">zgc:110368</name>
</gene>
<proteinExistence type="evidence at protein level"/>
<organism>
    <name type="scientific">Danio rerio</name>
    <name type="common">Zebrafish</name>
    <name type="synonym">Brachydanio rerio</name>
    <dbReference type="NCBI Taxonomy" id="7955"/>
    <lineage>
        <taxon>Eukaryota</taxon>
        <taxon>Metazoa</taxon>
        <taxon>Chordata</taxon>
        <taxon>Craniata</taxon>
        <taxon>Vertebrata</taxon>
        <taxon>Euteleostomi</taxon>
        <taxon>Actinopterygii</taxon>
        <taxon>Neopterygii</taxon>
        <taxon>Teleostei</taxon>
        <taxon>Ostariophysi</taxon>
        <taxon>Cypriniformes</taxon>
        <taxon>Danionidae</taxon>
        <taxon>Danioninae</taxon>
        <taxon>Danio</taxon>
    </lineage>
</organism>
<accession>Q568D5</accession>
<reference key="1">
    <citation type="submission" date="2005-04" db="EMBL/GenBank/DDBJ databases">
        <authorList>
            <consortium name="NIH - Zebrafish Gene Collection (ZGC) project"/>
        </authorList>
    </citation>
    <scope>NUCLEOTIDE SEQUENCE [LARGE SCALE MRNA]</scope>
    <source>
        <tissue>Olfactory epithelium</tissue>
    </source>
</reference>
<reference key="2">
    <citation type="journal article" date="2013" name="Nature">
        <title>The zebrafish reference genome sequence and its relationship to the human genome.</title>
        <authorList>
            <person name="Howe K."/>
            <person name="Clark M.D."/>
            <person name="Torroja C.F."/>
            <person name="Torrance J."/>
            <person name="Berthelot C."/>
            <person name="Muffato M."/>
            <person name="Collins J.E."/>
            <person name="Humphray S."/>
            <person name="McLaren K."/>
            <person name="Matthews L."/>
            <person name="McLaren S."/>
            <person name="Sealy I."/>
            <person name="Caccamo M."/>
            <person name="Churcher C."/>
            <person name="Scott C."/>
            <person name="Barrett J.C."/>
            <person name="Koch R."/>
            <person name="Rauch G.J."/>
            <person name="White S."/>
            <person name="Chow W."/>
            <person name="Kilian B."/>
            <person name="Quintais L.T."/>
            <person name="Guerra-Assuncao J.A."/>
            <person name="Zhou Y."/>
            <person name="Gu Y."/>
            <person name="Yen J."/>
            <person name="Vogel J.H."/>
            <person name="Eyre T."/>
            <person name="Redmond S."/>
            <person name="Banerjee R."/>
            <person name="Chi J."/>
            <person name="Fu B."/>
            <person name="Langley E."/>
            <person name="Maguire S.F."/>
            <person name="Laird G.K."/>
            <person name="Lloyd D."/>
            <person name="Kenyon E."/>
            <person name="Donaldson S."/>
            <person name="Sehra H."/>
            <person name="Almeida-King J."/>
            <person name="Loveland J."/>
            <person name="Trevanion S."/>
            <person name="Jones M."/>
            <person name="Quail M."/>
            <person name="Willey D."/>
            <person name="Hunt A."/>
            <person name="Burton J."/>
            <person name="Sims S."/>
            <person name="McLay K."/>
            <person name="Plumb B."/>
            <person name="Davis J."/>
            <person name="Clee C."/>
            <person name="Oliver K."/>
            <person name="Clark R."/>
            <person name="Riddle C."/>
            <person name="Elliot D."/>
            <person name="Threadgold G."/>
            <person name="Harden G."/>
            <person name="Ware D."/>
            <person name="Begum S."/>
            <person name="Mortimore B."/>
            <person name="Kerry G."/>
            <person name="Heath P."/>
            <person name="Phillimore B."/>
            <person name="Tracey A."/>
            <person name="Corby N."/>
            <person name="Dunn M."/>
            <person name="Johnson C."/>
            <person name="Wood J."/>
            <person name="Clark S."/>
            <person name="Pelan S."/>
            <person name="Griffiths G."/>
            <person name="Smith M."/>
            <person name="Glithero R."/>
            <person name="Howden P."/>
            <person name="Barker N."/>
            <person name="Lloyd C."/>
            <person name="Stevens C."/>
            <person name="Harley J."/>
            <person name="Holt K."/>
            <person name="Panagiotidis G."/>
            <person name="Lovell J."/>
            <person name="Beasley H."/>
            <person name="Henderson C."/>
            <person name="Gordon D."/>
            <person name="Auger K."/>
            <person name="Wright D."/>
            <person name="Collins J."/>
            <person name="Raisen C."/>
            <person name="Dyer L."/>
            <person name="Leung K."/>
            <person name="Robertson L."/>
            <person name="Ambridge K."/>
            <person name="Leongamornlert D."/>
            <person name="McGuire S."/>
            <person name="Gilderthorp R."/>
            <person name="Griffiths C."/>
            <person name="Manthravadi D."/>
            <person name="Nichol S."/>
            <person name="Barker G."/>
            <person name="Whitehead S."/>
            <person name="Kay M."/>
            <person name="Brown J."/>
            <person name="Murnane C."/>
            <person name="Gray E."/>
            <person name="Humphries M."/>
            <person name="Sycamore N."/>
            <person name="Barker D."/>
            <person name="Saunders D."/>
            <person name="Wallis J."/>
            <person name="Babbage A."/>
            <person name="Hammond S."/>
            <person name="Mashreghi-Mohammadi M."/>
            <person name="Barr L."/>
            <person name="Martin S."/>
            <person name="Wray P."/>
            <person name="Ellington A."/>
            <person name="Matthews N."/>
            <person name="Ellwood M."/>
            <person name="Woodmansey R."/>
            <person name="Clark G."/>
            <person name="Cooper J."/>
            <person name="Tromans A."/>
            <person name="Grafham D."/>
            <person name="Skuce C."/>
            <person name="Pandian R."/>
            <person name="Andrews R."/>
            <person name="Harrison E."/>
            <person name="Kimberley A."/>
            <person name="Garnett J."/>
            <person name="Fosker N."/>
            <person name="Hall R."/>
            <person name="Garner P."/>
            <person name="Kelly D."/>
            <person name="Bird C."/>
            <person name="Palmer S."/>
            <person name="Gehring I."/>
            <person name="Berger A."/>
            <person name="Dooley C.M."/>
            <person name="Ersan-Urun Z."/>
            <person name="Eser C."/>
            <person name="Geiger H."/>
            <person name="Geisler M."/>
            <person name="Karotki L."/>
            <person name="Kirn A."/>
            <person name="Konantz J."/>
            <person name="Konantz M."/>
            <person name="Oberlander M."/>
            <person name="Rudolph-Geiger S."/>
            <person name="Teucke M."/>
            <person name="Lanz C."/>
            <person name="Raddatz G."/>
            <person name="Osoegawa K."/>
            <person name="Zhu B."/>
            <person name="Rapp A."/>
            <person name="Widaa S."/>
            <person name="Langford C."/>
            <person name="Yang F."/>
            <person name="Schuster S.C."/>
            <person name="Carter N.P."/>
            <person name="Harrow J."/>
            <person name="Ning Z."/>
            <person name="Herrero J."/>
            <person name="Searle S.M."/>
            <person name="Enright A."/>
            <person name="Geisler R."/>
            <person name="Plasterk R.H."/>
            <person name="Lee C."/>
            <person name="Westerfield M."/>
            <person name="de Jong P.J."/>
            <person name="Zon L.I."/>
            <person name="Postlethwait J.H."/>
            <person name="Nusslein-Volhard C."/>
            <person name="Hubbard T.J."/>
            <person name="Roest Crollius H."/>
            <person name="Rogers J."/>
            <person name="Stemple D.L."/>
        </authorList>
    </citation>
    <scope>NOMENCLATURE</scope>
    <source>
        <strain>Tuebingen</strain>
    </source>
</reference>
<reference key="3">
    <citation type="journal article" date="2015" name="Mol. Cell">
        <title>Higher-order assembly of BRCC36-KIAA0157 is required for DUB activity and biological function.</title>
        <authorList>
            <person name="Zeqiraj E."/>
            <person name="Tian L."/>
            <person name="Piggott C.A."/>
            <person name="Pillon M.C."/>
            <person name="Duffy N.M."/>
            <person name="Ceccarelli D.F."/>
            <person name="Keszei A.F."/>
            <person name="Lorenzen K."/>
            <person name="Kurinov I."/>
            <person name="Orlicky S."/>
            <person name="Gish G.D."/>
            <person name="Heck A.J."/>
            <person name="Guarne A."/>
            <person name="Greenberg R.A."/>
            <person name="Sicheri F."/>
        </authorList>
    </citation>
    <scope>FUNCTION</scope>
    <scope>IDENTIFICATION IN THE BRISC COMPLEX</scope>
</reference>